<proteinExistence type="inferred from homology"/>
<accession>A2C141</accession>
<reference key="1">
    <citation type="journal article" date="2007" name="PLoS Genet.">
        <title>Patterns and implications of gene gain and loss in the evolution of Prochlorococcus.</title>
        <authorList>
            <person name="Kettler G.C."/>
            <person name="Martiny A.C."/>
            <person name="Huang K."/>
            <person name="Zucker J."/>
            <person name="Coleman M.L."/>
            <person name="Rodrigue S."/>
            <person name="Chen F."/>
            <person name="Lapidus A."/>
            <person name="Ferriera S."/>
            <person name="Johnson J."/>
            <person name="Steglich C."/>
            <person name="Church G.M."/>
            <person name="Richardson P."/>
            <person name="Chisholm S.W."/>
        </authorList>
    </citation>
    <scope>NUCLEOTIDE SEQUENCE [LARGE SCALE GENOMIC DNA]</scope>
    <source>
        <strain>NATL1A</strain>
    </source>
</reference>
<protein>
    <recommendedName>
        <fullName evidence="1">Uroporphyrinogen decarboxylase</fullName>
        <shortName evidence="1">UPD</shortName>
        <shortName evidence="1">URO-D</shortName>
        <ecNumber evidence="1">4.1.1.37</ecNumber>
    </recommendedName>
</protein>
<feature type="chain" id="PRO_1000023937" description="Uroporphyrinogen decarboxylase">
    <location>
        <begin position="1"/>
        <end position="352"/>
    </location>
</feature>
<feature type="binding site" evidence="1">
    <location>
        <begin position="26"/>
        <end position="30"/>
    </location>
    <ligand>
        <name>substrate</name>
    </ligand>
</feature>
<feature type="binding site" evidence="1">
    <location>
        <position position="76"/>
    </location>
    <ligand>
        <name>substrate</name>
    </ligand>
</feature>
<feature type="binding site" evidence="1">
    <location>
        <position position="153"/>
    </location>
    <ligand>
        <name>substrate</name>
    </ligand>
</feature>
<feature type="binding site" evidence="1">
    <location>
        <position position="208"/>
    </location>
    <ligand>
        <name>substrate</name>
    </ligand>
</feature>
<feature type="binding site" evidence="1">
    <location>
        <position position="323"/>
    </location>
    <ligand>
        <name>substrate</name>
    </ligand>
</feature>
<feature type="site" description="Transition state stabilizer" evidence="1">
    <location>
        <position position="76"/>
    </location>
</feature>
<organism>
    <name type="scientific">Prochlorococcus marinus (strain NATL1A)</name>
    <dbReference type="NCBI Taxonomy" id="167555"/>
    <lineage>
        <taxon>Bacteria</taxon>
        <taxon>Bacillati</taxon>
        <taxon>Cyanobacteriota</taxon>
        <taxon>Cyanophyceae</taxon>
        <taxon>Synechococcales</taxon>
        <taxon>Prochlorococcaceae</taxon>
        <taxon>Prochlorococcus</taxon>
    </lineage>
</organism>
<evidence type="ECO:0000255" key="1">
    <source>
        <dbReference type="HAMAP-Rule" id="MF_00218"/>
    </source>
</evidence>
<keyword id="KW-0963">Cytoplasm</keyword>
<keyword id="KW-0210">Decarboxylase</keyword>
<keyword id="KW-0456">Lyase</keyword>
<keyword id="KW-0627">Porphyrin biosynthesis</keyword>
<sequence length="352" mass="39073">MNETTPLLLRAARGEHVERPPVWMMRQAGRYMKVYRDLRDNHPSFRERSENPDLSYEISMQPFTAFQPDGVILFSDILTPLPGMGINFDIVESKGPLINDPIRSLKQVKDLKPLQPEESMSFVGEVLGRLRESVGNKAAVLGFVGAPWTLAAYVVEGKSSKNYAVIKAMAFQEPELLHQLLNHFAESIANYLSYQIQSGAQVVQMFDSWAGQLSPQDYDEFAAPYQQKVVNLVKEKHPDTPMILYISGSAGVLERMGQTGVDIVSLDWTVDMADGLKRLPQSVGVQGNVDPGLLFGTPDAIRSRIVDVVKKAKGRKHILNLGHGILPGTPEENARVFFEAGKNVNELIKVSS</sequence>
<gene>
    <name evidence="1" type="primary">hemE</name>
    <name type="ordered locus">NATL1_06391</name>
</gene>
<dbReference type="EC" id="4.1.1.37" evidence="1"/>
<dbReference type="EMBL" id="CP000553">
    <property type="protein sequence ID" value="ABM75201.1"/>
    <property type="molecule type" value="Genomic_DNA"/>
</dbReference>
<dbReference type="RefSeq" id="WP_011823365.1">
    <property type="nucleotide sequence ID" value="NC_008819.1"/>
</dbReference>
<dbReference type="SMR" id="A2C141"/>
<dbReference type="KEGG" id="pme:NATL1_06391"/>
<dbReference type="eggNOG" id="COG0407">
    <property type="taxonomic scope" value="Bacteria"/>
</dbReference>
<dbReference type="HOGENOM" id="CLU_040933_0_2_3"/>
<dbReference type="UniPathway" id="UPA00251">
    <property type="reaction ID" value="UER00321"/>
</dbReference>
<dbReference type="Proteomes" id="UP000002592">
    <property type="component" value="Chromosome"/>
</dbReference>
<dbReference type="GO" id="GO:0005737">
    <property type="term" value="C:cytoplasm"/>
    <property type="evidence" value="ECO:0007669"/>
    <property type="project" value="UniProtKB-SubCell"/>
</dbReference>
<dbReference type="GO" id="GO:0004853">
    <property type="term" value="F:uroporphyrinogen decarboxylase activity"/>
    <property type="evidence" value="ECO:0007669"/>
    <property type="project" value="UniProtKB-UniRule"/>
</dbReference>
<dbReference type="GO" id="GO:0006782">
    <property type="term" value="P:protoporphyrinogen IX biosynthetic process"/>
    <property type="evidence" value="ECO:0007669"/>
    <property type="project" value="UniProtKB-UniRule"/>
</dbReference>
<dbReference type="CDD" id="cd00717">
    <property type="entry name" value="URO-D"/>
    <property type="match status" value="1"/>
</dbReference>
<dbReference type="FunFam" id="3.20.20.210:FF:000006">
    <property type="entry name" value="Uroporphyrinogen decarboxylase"/>
    <property type="match status" value="1"/>
</dbReference>
<dbReference type="Gene3D" id="3.20.20.210">
    <property type="match status" value="1"/>
</dbReference>
<dbReference type="HAMAP" id="MF_00218">
    <property type="entry name" value="URO_D"/>
    <property type="match status" value="1"/>
</dbReference>
<dbReference type="InterPro" id="IPR038071">
    <property type="entry name" value="UROD/MetE-like_sf"/>
</dbReference>
<dbReference type="InterPro" id="IPR006361">
    <property type="entry name" value="Uroporphyrinogen_deCO2ase_HemE"/>
</dbReference>
<dbReference type="InterPro" id="IPR000257">
    <property type="entry name" value="Uroporphyrinogen_deCOase"/>
</dbReference>
<dbReference type="NCBIfam" id="TIGR01464">
    <property type="entry name" value="hemE"/>
    <property type="match status" value="1"/>
</dbReference>
<dbReference type="PANTHER" id="PTHR21091">
    <property type="entry name" value="METHYLTETRAHYDROFOLATE:HOMOCYSTEINE METHYLTRANSFERASE RELATED"/>
    <property type="match status" value="1"/>
</dbReference>
<dbReference type="PANTHER" id="PTHR21091:SF169">
    <property type="entry name" value="UROPORPHYRINOGEN DECARBOXYLASE"/>
    <property type="match status" value="1"/>
</dbReference>
<dbReference type="Pfam" id="PF01208">
    <property type="entry name" value="URO-D"/>
    <property type="match status" value="1"/>
</dbReference>
<dbReference type="SUPFAM" id="SSF51726">
    <property type="entry name" value="UROD/MetE-like"/>
    <property type="match status" value="1"/>
</dbReference>
<dbReference type="PROSITE" id="PS00906">
    <property type="entry name" value="UROD_1"/>
    <property type="match status" value="1"/>
</dbReference>
<dbReference type="PROSITE" id="PS00907">
    <property type="entry name" value="UROD_2"/>
    <property type="match status" value="1"/>
</dbReference>
<comment type="function">
    <text evidence="1">Catalyzes the decarboxylation of four acetate groups of uroporphyrinogen-III to yield coproporphyrinogen-III.</text>
</comment>
<comment type="catalytic activity">
    <reaction evidence="1">
        <text>uroporphyrinogen III + 4 H(+) = coproporphyrinogen III + 4 CO2</text>
        <dbReference type="Rhea" id="RHEA:19865"/>
        <dbReference type="ChEBI" id="CHEBI:15378"/>
        <dbReference type="ChEBI" id="CHEBI:16526"/>
        <dbReference type="ChEBI" id="CHEBI:57308"/>
        <dbReference type="ChEBI" id="CHEBI:57309"/>
        <dbReference type="EC" id="4.1.1.37"/>
    </reaction>
</comment>
<comment type="pathway">
    <text evidence="1">Porphyrin-containing compound metabolism; protoporphyrin-IX biosynthesis; coproporphyrinogen-III from 5-aminolevulinate: step 4/4.</text>
</comment>
<comment type="subunit">
    <text evidence="1">Homodimer.</text>
</comment>
<comment type="subcellular location">
    <subcellularLocation>
        <location evidence="1">Cytoplasm</location>
    </subcellularLocation>
</comment>
<comment type="similarity">
    <text evidence="1">Belongs to the uroporphyrinogen decarboxylase family.</text>
</comment>
<name>DCUP_PROM1</name>